<name>P4HA3_BOVIN</name>
<gene>
    <name type="primary">P4HA3</name>
</gene>
<feature type="signal peptide" evidence="3">
    <location>
        <begin position="1"/>
        <end position="19"/>
    </location>
</feature>
<feature type="chain" id="PRO_0000317765" description="Prolyl 4-hydroxylase subunit alpha-3">
    <location>
        <begin position="20"/>
        <end position="544"/>
    </location>
</feature>
<feature type="repeat" description="TPR">
    <location>
        <begin position="227"/>
        <end position="260"/>
    </location>
</feature>
<feature type="domain" description="Fe2OG dioxygenase" evidence="4">
    <location>
        <begin position="422"/>
        <end position="529"/>
    </location>
</feature>
<feature type="coiled-coil region" evidence="3">
    <location>
        <begin position="107"/>
        <end position="131"/>
    </location>
</feature>
<feature type="binding site" evidence="4">
    <location>
        <position position="440"/>
    </location>
    <ligand>
        <name>Fe cation</name>
        <dbReference type="ChEBI" id="CHEBI:24875"/>
    </ligand>
</feature>
<feature type="binding site" evidence="4">
    <location>
        <position position="442"/>
    </location>
    <ligand>
        <name>Fe cation</name>
        <dbReference type="ChEBI" id="CHEBI:24875"/>
    </ligand>
</feature>
<feature type="binding site" evidence="4">
    <location>
        <position position="510"/>
    </location>
    <ligand>
        <name>Fe cation</name>
        <dbReference type="ChEBI" id="CHEBI:24875"/>
    </ligand>
</feature>
<feature type="binding site" evidence="4">
    <location>
        <position position="520"/>
    </location>
    <ligand>
        <name>2-oxoglutarate</name>
        <dbReference type="ChEBI" id="CHEBI:16810"/>
    </ligand>
</feature>
<feature type="glycosylation site" description="N-linked (GlcNAc...) asparagine" evidence="3">
    <location>
        <position position="248"/>
    </location>
</feature>
<feature type="glycosylation site" description="N-linked (GlcNAc...) asparagine" evidence="3">
    <location>
        <position position="482"/>
    </location>
</feature>
<accession>Q75UG4</accession>
<comment type="function">
    <text evidence="2">Catalyzes the post-translational formation of 4-hydroxyproline in -Xaa-Pro-Gly- sequences in collagens and other proteins.</text>
</comment>
<comment type="catalytic activity">
    <reaction evidence="2">
        <text>L-prolyl-[collagen] + 2-oxoglutarate + O2 = trans-4-hydroxy-L-prolyl-[collagen] + succinate + CO2</text>
        <dbReference type="Rhea" id="RHEA:18945"/>
        <dbReference type="Rhea" id="RHEA-COMP:11676"/>
        <dbReference type="Rhea" id="RHEA-COMP:11680"/>
        <dbReference type="ChEBI" id="CHEBI:15379"/>
        <dbReference type="ChEBI" id="CHEBI:16526"/>
        <dbReference type="ChEBI" id="CHEBI:16810"/>
        <dbReference type="ChEBI" id="CHEBI:30031"/>
        <dbReference type="ChEBI" id="CHEBI:50342"/>
        <dbReference type="ChEBI" id="CHEBI:61965"/>
        <dbReference type="EC" id="1.14.11.2"/>
    </reaction>
    <physiologicalReaction direction="left-to-right" evidence="2">
        <dbReference type="Rhea" id="RHEA:18946"/>
    </physiologicalReaction>
</comment>
<comment type="cofactor">
    <cofactor evidence="2">
        <name>Fe(2+)</name>
        <dbReference type="ChEBI" id="CHEBI:29033"/>
    </cofactor>
    <text evidence="2">Binds 1 Fe(2+) ion per subunit.</text>
</comment>
<comment type="cofactor">
    <cofactor evidence="2">
        <name>L-ascorbate</name>
        <dbReference type="ChEBI" id="CHEBI:38290"/>
    </cofactor>
</comment>
<comment type="subunit">
    <text evidence="2">Heterotetramer of two alpha-3 chains and two beta chains (the beta chain is the multi-functional PDI).</text>
</comment>
<comment type="subcellular location">
    <subcellularLocation>
        <location evidence="1">Endoplasmic reticulum lumen</location>
    </subcellularLocation>
</comment>
<comment type="PTM">
    <text evidence="1">N-glycosylation plays no role in the catalytic activity.</text>
</comment>
<comment type="similarity">
    <text evidence="5">Belongs to the P4HA family.</text>
</comment>
<organism>
    <name type="scientific">Bos taurus</name>
    <name type="common">Bovine</name>
    <dbReference type="NCBI Taxonomy" id="9913"/>
    <lineage>
        <taxon>Eukaryota</taxon>
        <taxon>Metazoa</taxon>
        <taxon>Chordata</taxon>
        <taxon>Craniata</taxon>
        <taxon>Vertebrata</taxon>
        <taxon>Euteleostomi</taxon>
        <taxon>Mammalia</taxon>
        <taxon>Eutheria</taxon>
        <taxon>Laurasiatheria</taxon>
        <taxon>Artiodactyla</taxon>
        <taxon>Ruminantia</taxon>
        <taxon>Pecora</taxon>
        <taxon>Bovidae</taxon>
        <taxon>Bovinae</taxon>
        <taxon>Bos</taxon>
    </lineage>
</organism>
<protein>
    <recommendedName>
        <fullName>Prolyl 4-hydroxylase subunit alpha-3</fullName>
        <shortName>4-PH alpha-3</shortName>
        <ecNumber evidence="2">1.14.11.2</ecNumber>
    </recommendedName>
    <alternativeName>
        <fullName>Procollagen-proline,2-oxoglutarate-4-dioxygenase subunit alpha-3</fullName>
    </alternativeName>
</protein>
<reference key="1">
    <citation type="submission" date="2003-11" db="EMBL/GenBank/DDBJ databases">
        <title>Cloning and expression of collagen prolyl 4-hydroxylase during bovine adipogenesis.</title>
        <authorList>
            <person name="Tahara K."/>
            <person name="Aso H."/>
            <person name="Yamasaki T."/>
            <person name="Takano S."/>
        </authorList>
    </citation>
    <scope>NUCLEOTIDE SEQUENCE [MRNA]</scope>
    <source>
        <tissue>Adipose tissue</tissue>
    </source>
</reference>
<proteinExistence type="evidence at transcript level"/>
<evidence type="ECO:0000250" key="1"/>
<evidence type="ECO:0000250" key="2">
    <source>
        <dbReference type="UniProtKB" id="Q7Z4N8"/>
    </source>
</evidence>
<evidence type="ECO:0000255" key="3"/>
<evidence type="ECO:0000255" key="4">
    <source>
        <dbReference type="PROSITE-ProRule" id="PRU00805"/>
    </source>
</evidence>
<evidence type="ECO:0000305" key="5"/>
<sequence length="544" mass="61023">MGPAARLAALLAVLAFRAGDPAEVAARGDTFSALTSVARALAPERRLLGLLRRYLRGEEARLRDLTRFYHKVLSLHEDSATPVSNPLLAFTLIKRLQSDWKNVVHSLEASENIRALKDGYERVEQDLPAFEDLEGAARALMRLQDVYMLNVKGLARGVFQRVTGSAVTDLYSPRRLFSLTGDDCFQVGKVAYDMGDYYHAIPWLEEAVSLFRGSYGEWKTEDEASLEDALDHLAFAYFQAGNVLCALNLSREFLLYSPDNKRVARNVLKYEKLLAESPNQAVAETVMQRPNVPHLQTRDTYEGLCQTLGSQPTHYRIPSLYCSYETSSSPYLLLQPVRKEVIHLEPYVVLYHDFVSDAEAQTIRGLAEPWLQRSVVASGEKQLPVEYRISKSAWLKDTVDPVLVTLDHRIAALTGLDVQPPYAEYLQVVNYGIGGHYEPHFDHATSPSSPLYRMNSGNRVATFMIYLSSVEAGGATAFIYGNFSVPVVKNAALFWWNLHRSGEGDGDTLHAACPVLVGDKWVANKWIHEYGQEFRRPCSSRPED</sequence>
<keyword id="KW-0175">Coiled coil</keyword>
<keyword id="KW-0223">Dioxygenase</keyword>
<keyword id="KW-0256">Endoplasmic reticulum</keyword>
<keyword id="KW-0325">Glycoprotein</keyword>
<keyword id="KW-0408">Iron</keyword>
<keyword id="KW-0479">Metal-binding</keyword>
<keyword id="KW-0560">Oxidoreductase</keyword>
<keyword id="KW-1185">Reference proteome</keyword>
<keyword id="KW-0732">Signal</keyword>
<keyword id="KW-0802">TPR repeat</keyword>
<keyword id="KW-0847">Vitamin C</keyword>
<dbReference type="EC" id="1.14.11.2" evidence="2"/>
<dbReference type="EMBL" id="AB126035">
    <property type="protein sequence ID" value="BAD18888.1"/>
    <property type="molecule type" value="mRNA"/>
</dbReference>
<dbReference type="RefSeq" id="NP_001001598.1">
    <property type="nucleotide sequence ID" value="NM_001001598.2"/>
</dbReference>
<dbReference type="SMR" id="Q75UG4"/>
<dbReference type="FunCoup" id="Q75UG4">
    <property type="interactions" value="60"/>
</dbReference>
<dbReference type="STRING" id="9913.ENSBTAP00000008644"/>
<dbReference type="GlyCosmos" id="Q75UG4">
    <property type="glycosylation" value="2 sites, No reported glycans"/>
</dbReference>
<dbReference type="GlyGen" id="Q75UG4">
    <property type="glycosylation" value="2 sites"/>
</dbReference>
<dbReference type="PaxDb" id="9913-ENSBTAP00000008644"/>
<dbReference type="GeneID" id="414348"/>
<dbReference type="KEGG" id="bta:414348"/>
<dbReference type="CTD" id="283208"/>
<dbReference type="VEuPathDB" id="HostDB:ENSBTAG00000006579"/>
<dbReference type="eggNOG" id="KOG1591">
    <property type="taxonomic scope" value="Eukaryota"/>
</dbReference>
<dbReference type="HOGENOM" id="CLU_024155_1_0_1"/>
<dbReference type="InParanoid" id="Q75UG4"/>
<dbReference type="OMA" id="DKWANKW"/>
<dbReference type="OrthoDB" id="420380at2759"/>
<dbReference type="TreeFam" id="TF313393"/>
<dbReference type="Reactome" id="R-BTA-1650814">
    <property type="pathway name" value="Collagen biosynthesis and modifying enzymes"/>
</dbReference>
<dbReference type="Proteomes" id="UP000009136">
    <property type="component" value="Chromosome 15"/>
</dbReference>
<dbReference type="Bgee" id="ENSBTAG00000006579">
    <property type="expression patterns" value="Expressed in pigment epithelium of eye and 98 other cell types or tissues"/>
</dbReference>
<dbReference type="GO" id="GO:0005783">
    <property type="term" value="C:endoplasmic reticulum"/>
    <property type="evidence" value="ECO:0000318"/>
    <property type="project" value="GO_Central"/>
</dbReference>
<dbReference type="GO" id="GO:0005788">
    <property type="term" value="C:endoplasmic reticulum lumen"/>
    <property type="evidence" value="ECO:0007669"/>
    <property type="project" value="UniProtKB-SubCell"/>
</dbReference>
<dbReference type="GO" id="GO:0005506">
    <property type="term" value="F:iron ion binding"/>
    <property type="evidence" value="ECO:0007669"/>
    <property type="project" value="InterPro"/>
</dbReference>
<dbReference type="GO" id="GO:0031418">
    <property type="term" value="F:L-ascorbic acid binding"/>
    <property type="evidence" value="ECO:0007669"/>
    <property type="project" value="UniProtKB-KW"/>
</dbReference>
<dbReference type="GO" id="GO:0004656">
    <property type="term" value="F:procollagen-proline 4-dioxygenase activity"/>
    <property type="evidence" value="ECO:0000318"/>
    <property type="project" value="GO_Central"/>
</dbReference>
<dbReference type="GO" id="GO:0030199">
    <property type="term" value="P:collagen fibril organization"/>
    <property type="evidence" value="ECO:0000318"/>
    <property type="project" value="GO_Central"/>
</dbReference>
<dbReference type="FunFam" id="2.60.120.620:FF:000013">
    <property type="entry name" value="Prolyl 4-hydroxylase subunit alpha 3"/>
    <property type="match status" value="1"/>
</dbReference>
<dbReference type="FunFam" id="1.25.40.10:FF:000161">
    <property type="entry name" value="prolyl 4-hydroxylase subunit alpha-3 isoform X1"/>
    <property type="match status" value="1"/>
</dbReference>
<dbReference type="Gene3D" id="6.10.140.1460">
    <property type="match status" value="1"/>
</dbReference>
<dbReference type="Gene3D" id="2.60.120.620">
    <property type="entry name" value="q2cbj1_9rhob like domain"/>
    <property type="match status" value="1"/>
</dbReference>
<dbReference type="Gene3D" id="1.25.40.10">
    <property type="entry name" value="Tetratricopeptide repeat domain"/>
    <property type="match status" value="1"/>
</dbReference>
<dbReference type="InterPro" id="IPR005123">
    <property type="entry name" value="Oxoglu/Fe-dep_dioxygenase_dom"/>
</dbReference>
<dbReference type="InterPro" id="IPR045054">
    <property type="entry name" value="P4HA-like"/>
</dbReference>
<dbReference type="InterPro" id="IPR006620">
    <property type="entry name" value="Pro_4_hyd_alph"/>
</dbReference>
<dbReference type="InterPro" id="IPR044862">
    <property type="entry name" value="Pro_4_hyd_alph_FE2OG_OXY"/>
</dbReference>
<dbReference type="InterPro" id="IPR013547">
    <property type="entry name" value="Pro_4_hyd_alph_N"/>
</dbReference>
<dbReference type="InterPro" id="IPR011990">
    <property type="entry name" value="TPR-like_helical_dom_sf"/>
</dbReference>
<dbReference type="PANTHER" id="PTHR10869">
    <property type="entry name" value="PROLYL 4-HYDROXYLASE ALPHA SUBUNIT"/>
    <property type="match status" value="1"/>
</dbReference>
<dbReference type="PANTHER" id="PTHR10869:SF223">
    <property type="entry name" value="PROLYL 4-HYDROXYLASE SUBUNIT ALPHA-3"/>
    <property type="match status" value="1"/>
</dbReference>
<dbReference type="Pfam" id="PF13640">
    <property type="entry name" value="2OG-FeII_Oxy_3"/>
    <property type="match status" value="1"/>
</dbReference>
<dbReference type="Pfam" id="PF08336">
    <property type="entry name" value="P4Ha_N"/>
    <property type="match status" value="1"/>
</dbReference>
<dbReference type="Pfam" id="PF23558">
    <property type="entry name" value="TPR_P4H"/>
    <property type="match status" value="1"/>
</dbReference>
<dbReference type="SMART" id="SM00702">
    <property type="entry name" value="P4Hc"/>
    <property type="match status" value="1"/>
</dbReference>
<dbReference type="SUPFAM" id="SSF48452">
    <property type="entry name" value="TPR-like"/>
    <property type="match status" value="1"/>
</dbReference>
<dbReference type="PROSITE" id="PS51471">
    <property type="entry name" value="FE2OG_OXY"/>
    <property type="match status" value="1"/>
</dbReference>